<accession>Q2YDE8</accession>
<sequence>MKKSNRKSPTRIDEKDDICVPDSKDPGELQNMLNGGEYAPFVSPPILESNFIQVNRRGESIYLHNRANWVTVGICSSNPTTKTPNVMLLAHLTPTAQKDSEPLFTSLLTSPSPENLVLTRFLPLQFVTLSVHDAENMRIKVKLVSGRAYYLQLCAPACKQEALFCQWVELISLLNKEKAKASKVSEVSSLSEITNSTDITGSVDIMDIAAFPAIQTSHLSTCSDPNNDVESVDFSEFTDITDVTDDTDIPENEVTEAPDINIVTEVTEVTDICGVTASSGVRVVFENDDILKAKQEEKEKMENILKSGCLRDTKSKNEFRESPKRVTISNLALTFEGERCFQTTLTPEEDETEKSKEMSDRPREIRTMDSESTTLKAEEPRSRRTDSDTSDKCKLLN</sequence>
<evidence type="ECO:0000250" key="1">
    <source>
        <dbReference type="UniProtKB" id="D3YV92"/>
    </source>
</evidence>
<evidence type="ECO:0000256" key="2">
    <source>
        <dbReference type="SAM" id="MobiDB-lite"/>
    </source>
</evidence>
<evidence type="ECO:0000305" key="3"/>
<proteinExistence type="evidence at transcript level"/>
<organism>
    <name type="scientific">Bos taurus</name>
    <name type="common">Bovine</name>
    <dbReference type="NCBI Taxonomy" id="9913"/>
    <lineage>
        <taxon>Eukaryota</taxon>
        <taxon>Metazoa</taxon>
        <taxon>Chordata</taxon>
        <taxon>Craniata</taxon>
        <taxon>Vertebrata</taxon>
        <taxon>Euteleostomi</taxon>
        <taxon>Mammalia</taxon>
        <taxon>Eutheria</taxon>
        <taxon>Laurasiatheria</taxon>
        <taxon>Artiodactyla</taxon>
        <taxon>Ruminantia</taxon>
        <taxon>Pecora</taxon>
        <taxon>Bovidae</taxon>
        <taxon>Bovinae</taxon>
        <taxon>Bos</taxon>
    </lineage>
</organism>
<name>GAR2_BOVIN</name>
<keyword id="KW-0966">Cell projection</keyword>
<keyword id="KW-0969">Cilium</keyword>
<keyword id="KW-0282">Flagellum</keyword>
<keyword id="KW-1185">Reference proteome</keyword>
<protein>
    <recommendedName>
        <fullName>Golgi-associated RAB2 interactor protein 2</fullName>
    </recommendedName>
</protein>
<gene>
    <name type="primary">GARIN2</name>
    <name type="synonym">FAM71D</name>
</gene>
<reference key="1">
    <citation type="submission" date="2005-11" db="EMBL/GenBank/DDBJ databases">
        <authorList>
            <consortium name="NIH - Mammalian Gene Collection (MGC) project"/>
        </authorList>
    </citation>
    <scope>NUCLEOTIDE SEQUENCE [LARGE SCALE MRNA]</scope>
    <source>
        <strain>Crossbred X Angus</strain>
        <tissue>Liver</tissue>
    </source>
</reference>
<dbReference type="EMBL" id="BC110256">
    <property type="protein sequence ID" value="AAI10257.1"/>
    <property type="molecule type" value="mRNA"/>
</dbReference>
<dbReference type="RefSeq" id="NP_001040090.1">
    <property type="nucleotide sequence ID" value="NM_001046625.1"/>
</dbReference>
<dbReference type="FunCoup" id="Q2YDE8">
    <property type="interactions" value="5"/>
</dbReference>
<dbReference type="STRING" id="9913.ENSBTAP00000073644"/>
<dbReference type="PaxDb" id="9913-ENSBTAP00000040913"/>
<dbReference type="GeneID" id="618905"/>
<dbReference type="KEGG" id="bta:618905"/>
<dbReference type="CTD" id="161142"/>
<dbReference type="eggNOG" id="ENOG502S1VC">
    <property type="taxonomic scope" value="Eukaryota"/>
</dbReference>
<dbReference type="InParanoid" id="Q2YDE8"/>
<dbReference type="OrthoDB" id="9445880at2759"/>
<dbReference type="Proteomes" id="UP000009136">
    <property type="component" value="Unplaced"/>
</dbReference>
<dbReference type="GO" id="GO:0097225">
    <property type="term" value="C:sperm midpiece"/>
    <property type="evidence" value="ECO:0000250"/>
    <property type="project" value="UniProtKB"/>
</dbReference>
<dbReference type="GO" id="GO:0030317">
    <property type="term" value="P:flagellated sperm motility"/>
    <property type="evidence" value="ECO:0000250"/>
    <property type="project" value="UniProtKB"/>
</dbReference>
<dbReference type="InterPro" id="IPR022168">
    <property type="entry name" value="GARIL-like_Rab2B-bd"/>
</dbReference>
<dbReference type="PANTHER" id="PTHR22574">
    <property type="match status" value="1"/>
</dbReference>
<dbReference type="PANTHER" id="PTHR22574:SF6">
    <property type="entry name" value="GOLGI-ASSOCIATED RAB2 INTERACTOR PROTEIN 2"/>
    <property type="match status" value="1"/>
</dbReference>
<dbReference type="Pfam" id="PF12480">
    <property type="entry name" value="GARIL_Rab2_bd"/>
    <property type="match status" value="1"/>
</dbReference>
<feature type="chain" id="PRO_0000261632" description="Golgi-associated RAB2 interactor protein 2">
    <location>
        <begin position="1"/>
        <end position="397"/>
    </location>
</feature>
<feature type="region of interest" description="Disordered" evidence="2">
    <location>
        <begin position="1"/>
        <end position="24"/>
    </location>
</feature>
<feature type="region of interest" description="Disordered" evidence="2">
    <location>
        <begin position="342"/>
        <end position="397"/>
    </location>
</feature>
<feature type="compositionally biased region" description="Basic and acidic residues" evidence="2">
    <location>
        <begin position="10"/>
        <end position="24"/>
    </location>
</feature>
<feature type="compositionally biased region" description="Basic and acidic residues" evidence="2">
    <location>
        <begin position="353"/>
        <end position="369"/>
    </location>
</feature>
<feature type="compositionally biased region" description="Basic and acidic residues" evidence="2">
    <location>
        <begin position="376"/>
        <end position="397"/>
    </location>
</feature>
<comment type="function">
    <text evidence="1">Seems to play a role in sperm motility.</text>
</comment>
<comment type="subunit">
    <text evidence="1">Interacts with CALM1.</text>
</comment>
<comment type="subcellular location">
    <subcellularLocation>
        <location evidence="1">Cell projection</location>
        <location evidence="1">Cilium</location>
        <location evidence="1">Flagellum</location>
    </subcellularLocation>
    <text evidence="1">In mature sperm, localizes in the midpiece of flagella.</text>
</comment>
<comment type="similarity">
    <text evidence="3">Belongs to the GARIN family.</text>
</comment>